<dbReference type="EC" id="2.7.4.25" evidence="1"/>
<dbReference type="EMBL" id="CP000749">
    <property type="protein sequence ID" value="ABR71768.1"/>
    <property type="molecule type" value="Genomic_DNA"/>
</dbReference>
<dbReference type="SMR" id="A6VZ89"/>
<dbReference type="STRING" id="400668.Mmwyl1_2856"/>
<dbReference type="KEGG" id="mmw:Mmwyl1_2856"/>
<dbReference type="eggNOG" id="COG0283">
    <property type="taxonomic scope" value="Bacteria"/>
</dbReference>
<dbReference type="HOGENOM" id="CLU_079959_2_0_6"/>
<dbReference type="OrthoDB" id="9807434at2"/>
<dbReference type="GO" id="GO:0005829">
    <property type="term" value="C:cytosol"/>
    <property type="evidence" value="ECO:0007669"/>
    <property type="project" value="TreeGrafter"/>
</dbReference>
<dbReference type="GO" id="GO:0005524">
    <property type="term" value="F:ATP binding"/>
    <property type="evidence" value="ECO:0007669"/>
    <property type="project" value="UniProtKB-UniRule"/>
</dbReference>
<dbReference type="GO" id="GO:0036430">
    <property type="term" value="F:CMP kinase activity"/>
    <property type="evidence" value="ECO:0007669"/>
    <property type="project" value="RHEA"/>
</dbReference>
<dbReference type="GO" id="GO:0036431">
    <property type="term" value="F:dCMP kinase activity"/>
    <property type="evidence" value="ECO:0007669"/>
    <property type="project" value="RHEA"/>
</dbReference>
<dbReference type="GO" id="GO:0015949">
    <property type="term" value="P:nucleobase-containing small molecule interconversion"/>
    <property type="evidence" value="ECO:0007669"/>
    <property type="project" value="TreeGrafter"/>
</dbReference>
<dbReference type="GO" id="GO:0006220">
    <property type="term" value="P:pyrimidine nucleotide metabolic process"/>
    <property type="evidence" value="ECO:0007669"/>
    <property type="project" value="UniProtKB-UniRule"/>
</dbReference>
<dbReference type="CDD" id="cd02020">
    <property type="entry name" value="CMPK"/>
    <property type="match status" value="1"/>
</dbReference>
<dbReference type="FunFam" id="3.40.50.300:FF:000262">
    <property type="entry name" value="Cytidylate kinase"/>
    <property type="match status" value="1"/>
</dbReference>
<dbReference type="Gene3D" id="3.40.50.300">
    <property type="entry name" value="P-loop containing nucleotide triphosphate hydrolases"/>
    <property type="match status" value="1"/>
</dbReference>
<dbReference type="HAMAP" id="MF_00238">
    <property type="entry name" value="Cytidyl_kinase_type1"/>
    <property type="match status" value="1"/>
</dbReference>
<dbReference type="InterPro" id="IPR003136">
    <property type="entry name" value="Cytidylate_kin"/>
</dbReference>
<dbReference type="InterPro" id="IPR011994">
    <property type="entry name" value="Cytidylate_kinase_dom"/>
</dbReference>
<dbReference type="InterPro" id="IPR027417">
    <property type="entry name" value="P-loop_NTPase"/>
</dbReference>
<dbReference type="NCBIfam" id="TIGR00017">
    <property type="entry name" value="cmk"/>
    <property type="match status" value="1"/>
</dbReference>
<dbReference type="PANTHER" id="PTHR21299:SF2">
    <property type="entry name" value="CYTIDYLATE KINASE"/>
    <property type="match status" value="1"/>
</dbReference>
<dbReference type="PANTHER" id="PTHR21299">
    <property type="entry name" value="CYTIDYLATE KINASE/PANTOATE-BETA-ALANINE LIGASE"/>
    <property type="match status" value="1"/>
</dbReference>
<dbReference type="Pfam" id="PF02224">
    <property type="entry name" value="Cytidylate_kin"/>
    <property type="match status" value="1"/>
</dbReference>
<dbReference type="SUPFAM" id="SSF52540">
    <property type="entry name" value="P-loop containing nucleoside triphosphate hydrolases"/>
    <property type="match status" value="1"/>
</dbReference>
<reference key="1">
    <citation type="submission" date="2007-06" db="EMBL/GenBank/DDBJ databases">
        <title>Complete sequence of Marinomonas sp. MWYL1.</title>
        <authorList>
            <consortium name="US DOE Joint Genome Institute"/>
            <person name="Copeland A."/>
            <person name="Lucas S."/>
            <person name="Lapidus A."/>
            <person name="Barry K."/>
            <person name="Glavina del Rio T."/>
            <person name="Dalin E."/>
            <person name="Tice H."/>
            <person name="Pitluck S."/>
            <person name="Kiss H."/>
            <person name="Brettin T."/>
            <person name="Bruce D."/>
            <person name="Detter J.C."/>
            <person name="Han C."/>
            <person name="Schmutz J."/>
            <person name="Larimer F."/>
            <person name="Land M."/>
            <person name="Hauser L."/>
            <person name="Kyrpides N."/>
            <person name="Kim E."/>
            <person name="Johnston A.W.B."/>
            <person name="Todd J.D."/>
            <person name="Rogers R."/>
            <person name="Wexler M."/>
            <person name="Bond P.L."/>
            <person name="Li Y."/>
            <person name="Richardson P."/>
        </authorList>
    </citation>
    <scope>NUCLEOTIDE SEQUENCE [LARGE SCALE GENOMIC DNA]</scope>
    <source>
        <strain>MWYL1</strain>
    </source>
</reference>
<sequence length="227" mass="24351">MINQGPVITIDGPSGAGKGTVSQLIAEKLGWHILDSGALYRLLALAVSHHGMSSDDVETLKVLAEHLDIQFQQSEEGKVEIILEGEIVTQAIRTEEVGNCASKLAAIPEVREGLLLRQRAFSQSPGLVADGRDMGTVVFPSAQIKIFLTASAEERAQRRLQQLQQKGEAVNLGGLVKKIKERDERDANRAIAPLVPAAGALVIDSTNLTIEQVVEMIFAETAKAGLV</sequence>
<organism>
    <name type="scientific">Marinomonas sp. (strain MWYL1)</name>
    <dbReference type="NCBI Taxonomy" id="400668"/>
    <lineage>
        <taxon>Bacteria</taxon>
        <taxon>Pseudomonadati</taxon>
        <taxon>Pseudomonadota</taxon>
        <taxon>Gammaproteobacteria</taxon>
        <taxon>Oceanospirillales</taxon>
        <taxon>Oceanospirillaceae</taxon>
        <taxon>Marinomonas</taxon>
    </lineage>
</organism>
<protein>
    <recommendedName>
        <fullName evidence="1">Cytidylate kinase</fullName>
        <shortName evidence="1">CK</shortName>
        <ecNumber evidence="1">2.7.4.25</ecNumber>
    </recommendedName>
    <alternativeName>
        <fullName evidence="1">Cytidine monophosphate kinase</fullName>
        <shortName evidence="1">CMP kinase</shortName>
    </alternativeName>
</protein>
<evidence type="ECO:0000255" key="1">
    <source>
        <dbReference type="HAMAP-Rule" id="MF_00238"/>
    </source>
</evidence>
<feature type="chain" id="PRO_1000078341" description="Cytidylate kinase">
    <location>
        <begin position="1"/>
        <end position="227"/>
    </location>
</feature>
<feature type="binding site" evidence="1">
    <location>
        <begin position="12"/>
        <end position="20"/>
    </location>
    <ligand>
        <name>ATP</name>
        <dbReference type="ChEBI" id="CHEBI:30616"/>
    </ligand>
</feature>
<accession>A6VZ89</accession>
<gene>
    <name evidence="1" type="primary">cmk</name>
    <name type="ordered locus">Mmwyl1_2856</name>
</gene>
<name>KCY_MARMS</name>
<comment type="catalytic activity">
    <reaction evidence="1">
        <text>CMP + ATP = CDP + ADP</text>
        <dbReference type="Rhea" id="RHEA:11600"/>
        <dbReference type="ChEBI" id="CHEBI:30616"/>
        <dbReference type="ChEBI" id="CHEBI:58069"/>
        <dbReference type="ChEBI" id="CHEBI:60377"/>
        <dbReference type="ChEBI" id="CHEBI:456216"/>
        <dbReference type="EC" id="2.7.4.25"/>
    </reaction>
</comment>
<comment type="catalytic activity">
    <reaction evidence="1">
        <text>dCMP + ATP = dCDP + ADP</text>
        <dbReference type="Rhea" id="RHEA:25094"/>
        <dbReference type="ChEBI" id="CHEBI:30616"/>
        <dbReference type="ChEBI" id="CHEBI:57566"/>
        <dbReference type="ChEBI" id="CHEBI:58593"/>
        <dbReference type="ChEBI" id="CHEBI:456216"/>
        <dbReference type="EC" id="2.7.4.25"/>
    </reaction>
</comment>
<comment type="subcellular location">
    <subcellularLocation>
        <location evidence="1">Cytoplasm</location>
    </subcellularLocation>
</comment>
<comment type="similarity">
    <text evidence="1">Belongs to the cytidylate kinase family. Type 1 subfamily.</text>
</comment>
<keyword id="KW-0067">ATP-binding</keyword>
<keyword id="KW-0963">Cytoplasm</keyword>
<keyword id="KW-0418">Kinase</keyword>
<keyword id="KW-0547">Nucleotide-binding</keyword>
<keyword id="KW-0808">Transferase</keyword>
<proteinExistence type="inferred from homology"/>